<dbReference type="EMBL" id="CP000115">
    <property type="protein sequence ID" value="ABA04632.1"/>
    <property type="molecule type" value="Genomic_DNA"/>
</dbReference>
<dbReference type="RefSeq" id="WP_011314646.1">
    <property type="nucleotide sequence ID" value="NC_007406.1"/>
</dbReference>
<dbReference type="SMR" id="Q3SSV9"/>
<dbReference type="STRING" id="323098.Nwi_1371"/>
<dbReference type="KEGG" id="nwi:Nwi_1371"/>
<dbReference type="eggNOG" id="COG0197">
    <property type="taxonomic scope" value="Bacteria"/>
</dbReference>
<dbReference type="HOGENOM" id="CLU_078858_2_1_5"/>
<dbReference type="OrthoDB" id="9802589at2"/>
<dbReference type="Proteomes" id="UP000002531">
    <property type="component" value="Chromosome"/>
</dbReference>
<dbReference type="GO" id="GO:0022625">
    <property type="term" value="C:cytosolic large ribosomal subunit"/>
    <property type="evidence" value="ECO:0007669"/>
    <property type="project" value="TreeGrafter"/>
</dbReference>
<dbReference type="GO" id="GO:0019843">
    <property type="term" value="F:rRNA binding"/>
    <property type="evidence" value="ECO:0007669"/>
    <property type="project" value="UniProtKB-UniRule"/>
</dbReference>
<dbReference type="GO" id="GO:0003735">
    <property type="term" value="F:structural constituent of ribosome"/>
    <property type="evidence" value="ECO:0007669"/>
    <property type="project" value="InterPro"/>
</dbReference>
<dbReference type="GO" id="GO:0000049">
    <property type="term" value="F:tRNA binding"/>
    <property type="evidence" value="ECO:0007669"/>
    <property type="project" value="UniProtKB-KW"/>
</dbReference>
<dbReference type="GO" id="GO:0006412">
    <property type="term" value="P:translation"/>
    <property type="evidence" value="ECO:0007669"/>
    <property type="project" value="UniProtKB-UniRule"/>
</dbReference>
<dbReference type="CDD" id="cd01433">
    <property type="entry name" value="Ribosomal_L16_L10e"/>
    <property type="match status" value="1"/>
</dbReference>
<dbReference type="FunFam" id="3.90.1170.10:FF:000001">
    <property type="entry name" value="50S ribosomal protein L16"/>
    <property type="match status" value="1"/>
</dbReference>
<dbReference type="Gene3D" id="3.90.1170.10">
    <property type="entry name" value="Ribosomal protein L10e/L16"/>
    <property type="match status" value="1"/>
</dbReference>
<dbReference type="HAMAP" id="MF_01342">
    <property type="entry name" value="Ribosomal_uL16"/>
    <property type="match status" value="1"/>
</dbReference>
<dbReference type="InterPro" id="IPR047873">
    <property type="entry name" value="Ribosomal_uL16"/>
</dbReference>
<dbReference type="InterPro" id="IPR000114">
    <property type="entry name" value="Ribosomal_uL16_bact-type"/>
</dbReference>
<dbReference type="InterPro" id="IPR020798">
    <property type="entry name" value="Ribosomal_uL16_CS"/>
</dbReference>
<dbReference type="InterPro" id="IPR016180">
    <property type="entry name" value="Ribosomal_uL16_dom"/>
</dbReference>
<dbReference type="InterPro" id="IPR036920">
    <property type="entry name" value="Ribosomal_uL16_sf"/>
</dbReference>
<dbReference type="NCBIfam" id="TIGR01164">
    <property type="entry name" value="rplP_bact"/>
    <property type="match status" value="1"/>
</dbReference>
<dbReference type="PANTHER" id="PTHR12220">
    <property type="entry name" value="50S/60S RIBOSOMAL PROTEIN L16"/>
    <property type="match status" value="1"/>
</dbReference>
<dbReference type="PANTHER" id="PTHR12220:SF13">
    <property type="entry name" value="LARGE RIBOSOMAL SUBUNIT PROTEIN UL16M"/>
    <property type="match status" value="1"/>
</dbReference>
<dbReference type="Pfam" id="PF00252">
    <property type="entry name" value="Ribosomal_L16"/>
    <property type="match status" value="1"/>
</dbReference>
<dbReference type="PRINTS" id="PR00060">
    <property type="entry name" value="RIBOSOMALL16"/>
</dbReference>
<dbReference type="SUPFAM" id="SSF54686">
    <property type="entry name" value="Ribosomal protein L16p/L10e"/>
    <property type="match status" value="1"/>
</dbReference>
<dbReference type="PROSITE" id="PS00586">
    <property type="entry name" value="RIBOSOMAL_L16_1"/>
    <property type="match status" value="1"/>
</dbReference>
<dbReference type="PROSITE" id="PS00701">
    <property type="entry name" value="RIBOSOMAL_L16_2"/>
    <property type="match status" value="1"/>
</dbReference>
<sequence>MMQPKKTKFRKAHKGRIHGVASSGATLAFGQFGLKAMAPERITARQIEAARRALTRHMKRAGRVWIRVFPDVPVSKKPAEVRMGSGKGAPELWVVRVKPGRVLFEIDGVAPQTAKEALTLAAAKLPIKTRFVARIAE</sequence>
<comment type="function">
    <text evidence="1">Binds 23S rRNA and is also seen to make contacts with the A and possibly P site tRNAs.</text>
</comment>
<comment type="subunit">
    <text evidence="1">Part of the 50S ribosomal subunit.</text>
</comment>
<comment type="similarity">
    <text evidence="1">Belongs to the universal ribosomal protein uL16 family.</text>
</comment>
<organism>
    <name type="scientific">Nitrobacter winogradskyi (strain ATCC 25391 / DSM 10237 / CIP 104748 / NCIMB 11846 / Nb-255)</name>
    <dbReference type="NCBI Taxonomy" id="323098"/>
    <lineage>
        <taxon>Bacteria</taxon>
        <taxon>Pseudomonadati</taxon>
        <taxon>Pseudomonadota</taxon>
        <taxon>Alphaproteobacteria</taxon>
        <taxon>Hyphomicrobiales</taxon>
        <taxon>Nitrobacteraceae</taxon>
        <taxon>Nitrobacter</taxon>
    </lineage>
</organism>
<evidence type="ECO:0000255" key="1">
    <source>
        <dbReference type="HAMAP-Rule" id="MF_01342"/>
    </source>
</evidence>
<evidence type="ECO:0000305" key="2"/>
<keyword id="KW-1185">Reference proteome</keyword>
<keyword id="KW-0687">Ribonucleoprotein</keyword>
<keyword id="KW-0689">Ribosomal protein</keyword>
<keyword id="KW-0694">RNA-binding</keyword>
<keyword id="KW-0699">rRNA-binding</keyword>
<keyword id="KW-0820">tRNA-binding</keyword>
<name>RL16_NITWN</name>
<protein>
    <recommendedName>
        <fullName evidence="1">Large ribosomal subunit protein uL16</fullName>
    </recommendedName>
    <alternativeName>
        <fullName evidence="2">50S ribosomal protein L16</fullName>
    </alternativeName>
</protein>
<gene>
    <name evidence="1" type="primary">rplP</name>
    <name type="ordered locus">Nwi_1371</name>
</gene>
<reference key="1">
    <citation type="journal article" date="2006" name="Appl. Environ. Microbiol.">
        <title>Genome sequence of the chemolithoautotrophic nitrite-oxidizing bacterium Nitrobacter winogradskyi Nb-255.</title>
        <authorList>
            <person name="Starkenburg S.R."/>
            <person name="Chain P.S.G."/>
            <person name="Sayavedra-Soto L.A."/>
            <person name="Hauser L."/>
            <person name="Land M.L."/>
            <person name="Larimer F.W."/>
            <person name="Malfatti S.A."/>
            <person name="Klotz M.G."/>
            <person name="Bottomley P.J."/>
            <person name="Arp D.J."/>
            <person name="Hickey W.J."/>
        </authorList>
    </citation>
    <scope>NUCLEOTIDE SEQUENCE [LARGE SCALE GENOMIC DNA]</scope>
    <source>
        <strain>ATCC 25391 / DSM 10237 / CIP 104748 / NCIMB 11846 / Nb-255</strain>
    </source>
</reference>
<feature type="chain" id="PRO_0000062154" description="Large ribosomal subunit protein uL16">
    <location>
        <begin position="1"/>
        <end position="137"/>
    </location>
</feature>
<accession>Q3SSV9</accession>
<proteinExistence type="inferred from homology"/>